<organism>
    <name type="scientific">Rattus norvegicus</name>
    <name type="common">Rat</name>
    <dbReference type="NCBI Taxonomy" id="10116"/>
    <lineage>
        <taxon>Eukaryota</taxon>
        <taxon>Metazoa</taxon>
        <taxon>Chordata</taxon>
        <taxon>Craniata</taxon>
        <taxon>Vertebrata</taxon>
        <taxon>Euteleostomi</taxon>
        <taxon>Mammalia</taxon>
        <taxon>Eutheria</taxon>
        <taxon>Euarchontoglires</taxon>
        <taxon>Glires</taxon>
        <taxon>Rodentia</taxon>
        <taxon>Myomorpha</taxon>
        <taxon>Muroidea</taxon>
        <taxon>Muridae</taxon>
        <taxon>Murinae</taxon>
        <taxon>Rattus</taxon>
    </lineage>
</organism>
<evidence type="ECO:0000250" key="1"/>
<evidence type="ECO:0000250" key="2">
    <source>
        <dbReference type="UniProtKB" id="Q9CY00"/>
    </source>
</evidence>
<evidence type="ECO:0000255" key="3"/>
<evidence type="ECO:0000305" key="4"/>
<accession>B2RYD6</accession>
<sequence>MAGLSSSQIPDGEFTAVVYRLIRDSRYSEAVQLLSAELQGSPRSRAGLSLLAYCYYRLQEFELAAECYEQLSQMHPELEQYRLYQAQALYKACLYPEATRVAFLLDNPTYQTRVLRLQAAIKYSEGDLPGARSLVEQLLSGEGAEDSGGENDYDGQINLGCLLYKEGHYEAACSKFLAALQASGYQPDISYNLALAYYSSRQYAPALKHIADIIERGIRQHPELGVGMTTEGIDVRSVGNTIVLHQTALVEAFNLKAAIEYQLRNYEAAQEALTDMPPRAEEELDPVTLHNQALMNMDAKPTEGFEKLQFLLQQNPFPPETFGNLLLLYCKYEYFDLAADVLAENAHLTYKFLTPYLYDFLDAMITCQTAPEEAFIKLDGLAGMLTEQLRRLTIQVQDARHSRDDESAKKAVNDYDETLEKYIPVLMAQAKIYWNLENYPMVEKIFRKSVEFCNDHDVWKLNVAHVLFMQENKYKEAIGFYEPIVKKNYDNILSVSAIVLANLCVSYIMTSQNEEAEELMRKIEKEEEQLSYDDPDKKIYHLCIVNLVIGTLYCAKGNYDFGISRVIKSLEPYHKKLGTDTWYYAKRCFLSLLENMSKHTIMLRDSVIQECVQFLEHCELYGRSIPAIIEQPLEEERMHTGKNTVTYESRKLRALIYEIIGWNM</sequence>
<proteinExistence type="evidence at transcript level"/>
<dbReference type="EMBL" id="BC166739">
    <property type="protein sequence ID" value="AAI66739.1"/>
    <property type="molecule type" value="mRNA"/>
</dbReference>
<dbReference type="RefSeq" id="NP_001121079.1">
    <property type="nucleotide sequence ID" value="NM_001127607.1"/>
</dbReference>
<dbReference type="SMR" id="B2RYD6"/>
<dbReference type="FunCoup" id="B2RYD6">
    <property type="interactions" value="485"/>
</dbReference>
<dbReference type="STRING" id="10116.ENSRNOP00000045862"/>
<dbReference type="PhosphoSitePlus" id="B2RYD6"/>
<dbReference type="PaxDb" id="10116-ENSRNOP00000013565"/>
<dbReference type="PeptideAtlas" id="B2RYD6"/>
<dbReference type="GeneID" id="499814"/>
<dbReference type="KEGG" id="rno:499814"/>
<dbReference type="UCSC" id="RGD:1590784">
    <property type="organism name" value="rat"/>
</dbReference>
<dbReference type="AGR" id="RGD:1590784"/>
<dbReference type="CTD" id="150737"/>
<dbReference type="RGD" id="1590784">
    <property type="gene designation" value="Ift70b"/>
</dbReference>
<dbReference type="eggNOG" id="KOG4340">
    <property type="taxonomic scope" value="Eukaryota"/>
</dbReference>
<dbReference type="InParanoid" id="B2RYD6"/>
<dbReference type="OrthoDB" id="15072at9989"/>
<dbReference type="PhylomeDB" id="B2RYD6"/>
<dbReference type="Reactome" id="R-RNO-5620924">
    <property type="pathway name" value="Intraflagellar transport"/>
</dbReference>
<dbReference type="PRO" id="PR:B2RYD6"/>
<dbReference type="Proteomes" id="UP000002494">
    <property type="component" value="Unplaced"/>
</dbReference>
<dbReference type="GO" id="GO:0005879">
    <property type="term" value="C:axonemal microtubule"/>
    <property type="evidence" value="ECO:0000318"/>
    <property type="project" value="GO_Central"/>
</dbReference>
<dbReference type="GO" id="GO:0030992">
    <property type="term" value="C:intraciliary transport particle B"/>
    <property type="evidence" value="ECO:0000266"/>
    <property type="project" value="RGD"/>
</dbReference>
<dbReference type="GO" id="GO:0120170">
    <property type="term" value="F:intraciliary transport particle B binding"/>
    <property type="evidence" value="ECO:0000318"/>
    <property type="project" value="GO_Central"/>
</dbReference>
<dbReference type="GO" id="GO:0042073">
    <property type="term" value="P:intraciliary transport"/>
    <property type="evidence" value="ECO:0000318"/>
    <property type="project" value="GO_Central"/>
</dbReference>
<dbReference type="FunFam" id="1.25.40.10:FF:000226">
    <property type="entry name" value="Tetratricopeptide repeat protein 30A"/>
    <property type="match status" value="1"/>
</dbReference>
<dbReference type="FunFam" id="1.25.40.10:FF:000211">
    <property type="entry name" value="tetratricopeptide repeat protein 30B"/>
    <property type="match status" value="1"/>
</dbReference>
<dbReference type="Gene3D" id="1.25.40.10">
    <property type="entry name" value="Tetratricopeptide repeat domain"/>
    <property type="match status" value="2"/>
</dbReference>
<dbReference type="InterPro" id="IPR011990">
    <property type="entry name" value="TPR-like_helical_dom_sf"/>
</dbReference>
<dbReference type="InterPro" id="IPR019734">
    <property type="entry name" value="TPR_rpt"/>
</dbReference>
<dbReference type="InterPro" id="IPR039941">
    <property type="entry name" value="TT30"/>
</dbReference>
<dbReference type="PANTHER" id="PTHR20931:SF7">
    <property type="entry name" value="INTRAFLAGELLAR TRANSPORT PROTEIN 70B"/>
    <property type="match status" value="1"/>
</dbReference>
<dbReference type="PANTHER" id="PTHR20931">
    <property type="entry name" value="TETRATRICOPEPTIDE REPEAT PROTEIN 30"/>
    <property type="match status" value="1"/>
</dbReference>
<dbReference type="Pfam" id="PF13432">
    <property type="entry name" value="TPR_16"/>
    <property type="match status" value="2"/>
</dbReference>
<dbReference type="SMART" id="SM00028">
    <property type="entry name" value="TPR"/>
    <property type="match status" value="4"/>
</dbReference>
<dbReference type="SUPFAM" id="SSF48452">
    <property type="entry name" value="TPR-like"/>
    <property type="match status" value="3"/>
</dbReference>
<dbReference type="PROSITE" id="PS50293">
    <property type="entry name" value="TPR_REGION"/>
    <property type="match status" value="3"/>
</dbReference>
<reference key="1">
    <citation type="journal article" date="2004" name="Genome Res.">
        <title>The status, quality, and expansion of the NIH full-length cDNA project: the Mammalian Gene Collection (MGC).</title>
        <authorList>
            <consortium name="The MGC Project Team"/>
        </authorList>
    </citation>
    <scope>NUCLEOTIDE SEQUENCE [LARGE SCALE MRNA]</scope>
    <source>
        <tissue>Prostate</tissue>
    </source>
</reference>
<keyword id="KW-0966">Cell projection</keyword>
<keyword id="KW-0969">Cilium</keyword>
<keyword id="KW-0970">Cilium biogenesis/degradation</keyword>
<keyword id="KW-0175">Coiled coil</keyword>
<keyword id="KW-1185">Reference proteome</keyword>
<keyword id="KW-0677">Repeat</keyword>
<keyword id="KW-0802">TPR repeat</keyword>
<gene>
    <name type="primary">Ift70b</name>
    <name type="synonym">Ttc30b</name>
</gene>
<feature type="chain" id="PRO_0000363863" description="Intraflagellar transport protein 70B">
    <location>
        <begin position="1"/>
        <end position="664"/>
    </location>
</feature>
<feature type="repeat" description="TPR 1">
    <location>
        <begin position="11"/>
        <end position="44"/>
    </location>
</feature>
<feature type="repeat" description="TPR 2">
    <location>
        <begin position="45"/>
        <end position="78"/>
    </location>
</feature>
<feature type="repeat" description="TPR 3">
    <location>
        <begin position="153"/>
        <end position="186"/>
    </location>
</feature>
<feature type="repeat" description="TPR 4">
    <location>
        <begin position="188"/>
        <end position="220"/>
    </location>
</feature>
<feature type="repeat" description="TPR 5">
    <location>
        <begin position="385"/>
        <end position="418"/>
    </location>
</feature>
<feature type="repeat" description="TPR 6">
    <location>
        <begin position="423"/>
        <end position="456"/>
    </location>
</feature>
<feature type="repeat" description="TPR 7">
    <location>
        <begin position="458"/>
        <end position="491"/>
    </location>
</feature>
<feature type="repeat" description="TPR 8">
    <location>
        <begin position="543"/>
        <end position="576"/>
    </location>
</feature>
<feature type="coiled-coil region" evidence="3">
    <location>
        <begin position="507"/>
        <end position="534"/>
    </location>
</feature>
<name>IT70B_RAT</name>
<protein>
    <recommendedName>
        <fullName>Intraflagellar transport protein 70B</fullName>
    </recommendedName>
    <alternativeName>
        <fullName>Tetratricopeptide repeat protein 30B</fullName>
        <shortName>TPR repeat protein 30B</shortName>
    </alternativeName>
</protein>
<comment type="function">
    <text evidence="1">Required for polyglutamylation of axonemal tubulin. Plays a role in anterograde intraflagellar transport (IFT), the process by which cilia precursors are transported from the base of the cilium to the site of their incorporation at the tip.</text>
</comment>
<comment type="subunit">
    <text evidence="2">Interacts with the IFT B complex components IFT27, IFT46, IFT74, IFT52, IFT57, IFT80, IFT81 and IFT88 (By similarity). Interacts with KIF17 (By similarity).</text>
</comment>
<comment type="subcellular location">
    <subcellularLocation>
        <location evidence="1">Cell projection</location>
        <location evidence="1">Cilium</location>
    </subcellularLocation>
</comment>
<comment type="similarity">
    <text evidence="4">Belongs to the TTC30/dfy-1/fleer family.</text>
</comment>